<name>GPMI_PROMM</name>
<sequence>MPSSSSGNSRHFSRVAPVVLAILDGWGHREEVEHNSIRSAETPIMDALWHAYPHTLIEASGAAVGLPDNQMGNSEVGHLTIGAGRVIRQELVRISETVQAGRLGQTPALIALAERLRKSDGTLHLLGLCSDGGVHSHINHLCGLLHWAAAAGLNKVAVHLITDGRDTPIQSASKYLHQIEDAINASGVGELASLCGRYWAMDRDHRWERTIRAYEVLTDPNQSISRVTAEDVLSASYANGTTDEFLEPTRLSNNYFKDGDGLVMFNFRPDRARQLVQALTLPDFDGFPRANQPSLDVVTFTQYEHDLPVGVAFPAESLDDLLGQVVSEHGLRQYRTAETEKYPHVTYFMNGGIEQPLAGEERHLVPSPRVATYDLAPAMAADTLTESCVNAIESGVYSLVVINYANPDMVGHTGVMGAAQEAISTVDRCIGRLLDSTGRMGGTLLITADHGNAELMQGSDGQAWTAHTTNPVPVILVEGEKRKLAGYGNDIQLREGGGLADIAPTLLQLLDLPKPDAMSGLSLIQAIDSPTPSARLPQPV</sequence>
<keyword id="KW-0324">Glycolysis</keyword>
<keyword id="KW-0413">Isomerase</keyword>
<keyword id="KW-0464">Manganese</keyword>
<keyword id="KW-0479">Metal-binding</keyword>
<keyword id="KW-1185">Reference proteome</keyword>
<reference key="1">
    <citation type="journal article" date="2003" name="Nature">
        <title>Genome divergence in two Prochlorococcus ecotypes reflects oceanic niche differentiation.</title>
        <authorList>
            <person name="Rocap G."/>
            <person name="Larimer F.W."/>
            <person name="Lamerdin J.E."/>
            <person name="Malfatti S."/>
            <person name="Chain P."/>
            <person name="Ahlgren N.A."/>
            <person name="Arellano A."/>
            <person name="Coleman M."/>
            <person name="Hauser L."/>
            <person name="Hess W.R."/>
            <person name="Johnson Z.I."/>
            <person name="Land M.L."/>
            <person name="Lindell D."/>
            <person name="Post A.F."/>
            <person name="Regala W."/>
            <person name="Shah M."/>
            <person name="Shaw S.L."/>
            <person name="Steglich C."/>
            <person name="Sullivan M.B."/>
            <person name="Ting C.S."/>
            <person name="Tolonen A."/>
            <person name="Webb E.A."/>
            <person name="Zinser E.R."/>
            <person name="Chisholm S.W."/>
        </authorList>
    </citation>
    <scope>NUCLEOTIDE SEQUENCE [LARGE SCALE GENOMIC DNA]</scope>
    <source>
        <strain>MIT 9313</strain>
    </source>
</reference>
<protein>
    <recommendedName>
        <fullName evidence="1">2,3-bisphosphoglycerate-independent phosphoglycerate mutase</fullName>
        <shortName evidence="1">BPG-independent PGAM</shortName>
        <shortName evidence="1">Phosphoglyceromutase</shortName>
        <shortName evidence="1">iPGM</shortName>
        <ecNumber evidence="1">5.4.2.12</ecNumber>
    </recommendedName>
</protein>
<comment type="function">
    <text evidence="1">Catalyzes the interconversion of 2-phosphoglycerate and 3-phosphoglycerate.</text>
</comment>
<comment type="catalytic activity">
    <reaction evidence="1">
        <text>(2R)-2-phosphoglycerate = (2R)-3-phosphoglycerate</text>
        <dbReference type="Rhea" id="RHEA:15901"/>
        <dbReference type="ChEBI" id="CHEBI:58272"/>
        <dbReference type="ChEBI" id="CHEBI:58289"/>
        <dbReference type="EC" id="5.4.2.12"/>
    </reaction>
</comment>
<comment type="cofactor">
    <cofactor evidence="1">
        <name>Mn(2+)</name>
        <dbReference type="ChEBI" id="CHEBI:29035"/>
    </cofactor>
    <text evidence="1">Binds 2 manganese ions per subunit.</text>
</comment>
<comment type="pathway">
    <text evidence="1">Carbohydrate degradation; glycolysis; pyruvate from D-glyceraldehyde 3-phosphate: step 3/5.</text>
</comment>
<comment type="subunit">
    <text evidence="1">Monomer.</text>
</comment>
<comment type="similarity">
    <text evidence="1">Belongs to the BPG-independent phosphoglycerate mutase family.</text>
</comment>
<evidence type="ECO:0000255" key="1">
    <source>
        <dbReference type="HAMAP-Rule" id="MF_01038"/>
    </source>
</evidence>
<dbReference type="EC" id="5.4.2.12" evidence="1"/>
<dbReference type="EMBL" id="BX548175">
    <property type="protein sequence ID" value="CAE21621.1"/>
    <property type="molecule type" value="Genomic_DNA"/>
</dbReference>
<dbReference type="RefSeq" id="WP_011130814.1">
    <property type="nucleotide sequence ID" value="NC_005071.1"/>
</dbReference>
<dbReference type="SMR" id="Q7V5U5"/>
<dbReference type="KEGG" id="pmt:PMT_1446"/>
<dbReference type="eggNOG" id="COG0696">
    <property type="taxonomic scope" value="Bacteria"/>
</dbReference>
<dbReference type="HOGENOM" id="CLU_026099_2_0_3"/>
<dbReference type="OrthoDB" id="9800863at2"/>
<dbReference type="UniPathway" id="UPA00109">
    <property type="reaction ID" value="UER00186"/>
</dbReference>
<dbReference type="Proteomes" id="UP000001423">
    <property type="component" value="Chromosome"/>
</dbReference>
<dbReference type="GO" id="GO:0005829">
    <property type="term" value="C:cytosol"/>
    <property type="evidence" value="ECO:0007669"/>
    <property type="project" value="TreeGrafter"/>
</dbReference>
<dbReference type="GO" id="GO:0030145">
    <property type="term" value="F:manganese ion binding"/>
    <property type="evidence" value="ECO:0007669"/>
    <property type="project" value="UniProtKB-UniRule"/>
</dbReference>
<dbReference type="GO" id="GO:0004619">
    <property type="term" value="F:phosphoglycerate mutase activity"/>
    <property type="evidence" value="ECO:0007669"/>
    <property type="project" value="UniProtKB-EC"/>
</dbReference>
<dbReference type="GO" id="GO:0006007">
    <property type="term" value="P:glucose catabolic process"/>
    <property type="evidence" value="ECO:0007669"/>
    <property type="project" value="InterPro"/>
</dbReference>
<dbReference type="GO" id="GO:0006096">
    <property type="term" value="P:glycolytic process"/>
    <property type="evidence" value="ECO:0007669"/>
    <property type="project" value="UniProtKB-UniRule"/>
</dbReference>
<dbReference type="CDD" id="cd16010">
    <property type="entry name" value="iPGM"/>
    <property type="match status" value="1"/>
</dbReference>
<dbReference type="FunFam" id="3.40.1450.10:FF:000002">
    <property type="entry name" value="2,3-bisphosphoglycerate-independent phosphoglycerate mutase"/>
    <property type="match status" value="1"/>
</dbReference>
<dbReference type="Gene3D" id="3.40.720.10">
    <property type="entry name" value="Alkaline Phosphatase, subunit A"/>
    <property type="match status" value="1"/>
</dbReference>
<dbReference type="Gene3D" id="3.40.1450.10">
    <property type="entry name" value="BPG-independent phosphoglycerate mutase, domain B"/>
    <property type="match status" value="1"/>
</dbReference>
<dbReference type="HAMAP" id="MF_01038">
    <property type="entry name" value="GpmI"/>
    <property type="match status" value="1"/>
</dbReference>
<dbReference type="InterPro" id="IPR017850">
    <property type="entry name" value="Alkaline_phosphatase_core_sf"/>
</dbReference>
<dbReference type="InterPro" id="IPR011258">
    <property type="entry name" value="BPG-indep_PGM_N"/>
</dbReference>
<dbReference type="InterPro" id="IPR006124">
    <property type="entry name" value="Metalloenzyme"/>
</dbReference>
<dbReference type="InterPro" id="IPR036646">
    <property type="entry name" value="PGAM_B_sf"/>
</dbReference>
<dbReference type="InterPro" id="IPR005995">
    <property type="entry name" value="Pgm_bpd_ind"/>
</dbReference>
<dbReference type="NCBIfam" id="TIGR01307">
    <property type="entry name" value="pgm_bpd_ind"/>
    <property type="match status" value="1"/>
</dbReference>
<dbReference type="PANTHER" id="PTHR31637">
    <property type="entry name" value="2,3-BISPHOSPHOGLYCERATE-INDEPENDENT PHOSPHOGLYCERATE MUTASE"/>
    <property type="match status" value="1"/>
</dbReference>
<dbReference type="PANTHER" id="PTHR31637:SF0">
    <property type="entry name" value="2,3-BISPHOSPHOGLYCERATE-INDEPENDENT PHOSPHOGLYCERATE MUTASE"/>
    <property type="match status" value="1"/>
</dbReference>
<dbReference type="Pfam" id="PF06415">
    <property type="entry name" value="iPGM_N"/>
    <property type="match status" value="1"/>
</dbReference>
<dbReference type="Pfam" id="PF01676">
    <property type="entry name" value="Metalloenzyme"/>
    <property type="match status" value="1"/>
</dbReference>
<dbReference type="PIRSF" id="PIRSF001492">
    <property type="entry name" value="IPGAM"/>
    <property type="match status" value="1"/>
</dbReference>
<dbReference type="SUPFAM" id="SSF64158">
    <property type="entry name" value="2,3-Bisphosphoglycerate-independent phosphoglycerate mutase, substrate-binding domain"/>
    <property type="match status" value="1"/>
</dbReference>
<dbReference type="SUPFAM" id="SSF53649">
    <property type="entry name" value="Alkaline phosphatase-like"/>
    <property type="match status" value="1"/>
</dbReference>
<feature type="chain" id="PRO_0000212184" description="2,3-bisphosphoglycerate-independent phosphoglycerate mutase">
    <location>
        <begin position="1"/>
        <end position="540"/>
    </location>
</feature>
<feature type="active site" description="Phosphoserine intermediate" evidence="1">
    <location>
        <position position="74"/>
    </location>
</feature>
<feature type="binding site" evidence="1">
    <location>
        <position position="24"/>
    </location>
    <ligand>
        <name>Mn(2+)</name>
        <dbReference type="ChEBI" id="CHEBI:29035"/>
        <label>2</label>
    </ligand>
</feature>
<feature type="binding site" evidence="1">
    <location>
        <position position="74"/>
    </location>
    <ligand>
        <name>Mn(2+)</name>
        <dbReference type="ChEBI" id="CHEBI:29035"/>
        <label>2</label>
    </ligand>
</feature>
<feature type="binding site" evidence="1">
    <location>
        <position position="135"/>
    </location>
    <ligand>
        <name>substrate</name>
    </ligand>
</feature>
<feature type="binding site" evidence="1">
    <location>
        <begin position="165"/>
        <end position="166"/>
    </location>
    <ligand>
        <name>substrate</name>
    </ligand>
</feature>
<feature type="binding site" evidence="1">
    <location>
        <position position="197"/>
    </location>
    <ligand>
        <name>substrate</name>
    </ligand>
</feature>
<feature type="binding site" evidence="1">
    <location>
        <position position="203"/>
    </location>
    <ligand>
        <name>substrate</name>
    </ligand>
</feature>
<feature type="binding site" evidence="1">
    <location>
        <begin position="268"/>
        <end position="271"/>
    </location>
    <ligand>
        <name>substrate</name>
    </ligand>
</feature>
<feature type="binding site" evidence="1">
    <location>
        <position position="341"/>
    </location>
    <ligand>
        <name>substrate</name>
    </ligand>
</feature>
<feature type="binding site" evidence="1">
    <location>
        <position position="408"/>
    </location>
    <ligand>
        <name>Mn(2+)</name>
        <dbReference type="ChEBI" id="CHEBI:29035"/>
        <label>1</label>
    </ligand>
</feature>
<feature type="binding site" evidence="1">
    <location>
        <position position="412"/>
    </location>
    <ligand>
        <name>Mn(2+)</name>
        <dbReference type="ChEBI" id="CHEBI:29035"/>
        <label>1</label>
    </ligand>
</feature>
<feature type="binding site" evidence="1">
    <location>
        <position position="449"/>
    </location>
    <ligand>
        <name>Mn(2+)</name>
        <dbReference type="ChEBI" id="CHEBI:29035"/>
        <label>2</label>
    </ligand>
</feature>
<feature type="binding site" evidence="1">
    <location>
        <position position="450"/>
    </location>
    <ligand>
        <name>Mn(2+)</name>
        <dbReference type="ChEBI" id="CHEBI:29035"/>
        <label>2</label>
    </ligand>
</feature>
<feature type="binding site" evidence="1">
    <location>
        <position position="467"/>
    </location>
    <ligand>
        <name>Mn(2+)</name>
        <dbReference type="ChEBI" id="CHEBI:29035"/>
        <label>1</label>
    </ligand>
</feature>
<organism>
    <name type="scientific">Prochlorococcus marinus (strain MIT 9313)</name>
    <dbReference type="NCBI Taxonomy" id="74547"/>
    <lineage>
        <taxon>Bacteria</taxon>
        <taxon>Bacillati</taxon>
        <taxon>Cyanobacteriota</taxon>
        <taxon>Cyanophyceae</taxon>
        <taxon>Synechococcales</taxon>
        <taxon>Prochlorococcaceae</taxon>
        <taxon>Prochlorococcus</taxon>
    </lineage>
</organism>
<gene>
    <name evidence="1" type="primary">gpmI</name>
    <name type="synonym">pgmI</name>
    <name type="ordered locus">PMT_1446</name>
</gene>
<accession>Q7V5U5</accession>
<proteinExistence type="inferred from homology"/>